<accession>Q6D8V6</accession>
<sequence>MTYLFNQPSSFARELTEGFVAAHADKVRQVPGGVVRSTRSREGGVAIVVGGGSGHYPAFAGLVGQGLAHGAAMGNLFASPSAQQICSVARAAHNGGGVLLTFGNYAGDVLHFGQAKARLNAEGIPCELLAVTDDISSAPLNEWQKRRGVAGDLMVFKAVSAAAEAGYDLAAVLEVAERANQRTRSLGVAFSGCTLPGAEHPLFTVPEGMMAVGMGIHGEPGIRDVPISTADELAELLVSSLLKEVPHGITTLSGQRISVVLNGLGGVKYEELFVVYRRVSQLLVEQGLTVVEPEVGELVTSFNMAGLSLTLFWLDEELERFWRAPADAPAFRKGSMSPGEPLAERTFVAELEVIPNATAASKAAAHCVAAALNAARDIVLANVTELGRIDAIAGDGDHGIGMERGVIAAADKATEMLERQAGAGTLLQRAADAWADQAGGTSGAIWGVALNALGTVLGDEQRPDGRRVADGVRQAKESVMHFGKAKPGDKTLVDALIPFSLALTQRVETGMSLPEAWQQAAQCAQQAADDTAQLLPKIGRARPLAEKSLGTPDAGAISLAMILDAVSAVLNSDTTSTSSHQTATQAESER</sequence>
<gene>
    <name evidence="5" type="primary">lerK</name>
    <name evidence="6" type="ordered locus">ECA0866</name>
</gene>
<dbReference type="EC" id="2.7.1.209" evidence="4"/>
<dbReference type="EMBL" id="BX950851">
    <property type="protein sequence ID" value="CAG73778.1"/>
    <property type="molecule type" value="Genomic_DNA"/>
</dbReference>
<dbReference type="RefSeq" id="WP_011092469.1">
    <property type="nucleotide sequence ID" value="NC_004547.2"/>
</dbReference>
<dbReference type="SMR" id="Q6D8V6"/>
<dbReference type="STRING" id="218491.ECA0866"/>
<dbReference type="KEGG" id="eca:ECA0866"/>
<dbReference type="PATRIC" id="fig|218491.5.peg.866"/>
<dbReference type="eggNOG" id="COG2376">
    <property type="taxonomic scope" value="Bacteria"/>
</dbReference>
<dbReference type="HOGENOM" id="CLU_017054_6_1_6"/>
<dbReference type="OrthoDB" id="9806345at2"/>
<dbReference type="BioCyc" id="MetaCyc:MONOMER-20962"/>
<dbReference type="SABIO-RK" id="Q6D8V6"/>
<dbReference type="Proteomes" id="UP000007966">
    <property type="component" value="Chromosome"/>
</dbReference>
<dbReference type="GO" id="GO:0005829">
    <property type="term" value="C:cytosol"/>
    <property type="evidence" value="ECO:0007669"/>
    <property type="project" value="TreeGrafter"/>
</dbReference>
<dbReference type="GO" id="GO:0005524">
    <property type="term" value="F:ATP binding"/>
    <property type="evidence" value="ECO:0007669"/>
    <property type="project" value="UniProtKB-KW"/>
</dbReference>
<dbReference type="GO" id="GO:0004371">
    <property type="term" value="F:glycerone kinase activity"/>
    <property type="evidence" value="ECO:0007669"/>
    <property type="project" value="InterPro"/>
</dbReference>
<dbReference type="GO" id="GO:0019563">
    <property type="term" value="P:glycerol catabolic process"/>
    <property type="evidence" value="ECO:0007669"/>
    <property type="project" value="TreeGrafter"/>
</dbReference>
<dbReference type="FunFam" id="3.30.1180.20:FF:000001">
    <property type="entry name" value="Dihydroxyacetone kinase 1"/>
    <property type="match status" value="1"/>
</dbReference>
<dbReference type="FunFam" id="1.25.40.340:FF:000002">
    <property type="entry name" value="Dihydroxyacetone kinase, L subunit"/>
    <property type="match status" value="1"/>
</dbReference>
<dbReference type="FunFam" id="3.40.50.10440:FF:000003">
    <property type="entry name" value="Homodimeric dihydroxyacetone kinase"/>
    <property type="match status" value="1"/>
</dbReference>
<dbReference type="Gene3D" id="1.25.40.340">
    <property type="match status" value="1"/>
</dbReference>
<dbReference type="Gene3D" id="3.40.50.10440">
    <property type="entry name" value="Dihydroxyacetone kinase, domain 1"/>
    <property type="match status" value="1"/>
</dbReference>
<dbReference type="Gene3D" id="3.30.1180.20">
    <property type="entry name" value="Dihydroxyacetone kinase, domain 2"/>
    <property type="match status" value="1"/>
</dbReference>
<dbReference type="InterPro" id="IPR004006">
    <property type="entry name" value="DhaK_dom"/>
</dbReference>
<dbReference type="InterPro" id="IPR004007">
    <property type="entry name" value="DhaL_dom"/>
</dbReference>
<dbReference type="InterPro" id="IPR036117">
    <property type="entry name" value="DhaL_dom_sf"/>
</dbReference>
<dbReference type="InterPro" id="IPR050861">
    <property type="entry name" value="Dihydroxyacetone_Kinase"/>
</dbReference>
<dbReference type="NCBIfam" id="NF011049">
    <property type="entry name" value="PRK14479.1"/>
    <property type="match status" value="1"/>
</dbReference>
<dbReference type="PANTHER" id="PTHR28629">
    <property type="entry name" value="TRIOKINASE/FMN CYCLASE"/>
    <property type="match status" value="1"/>
</dbReference>
<dbReference type="PANTHER" id="PTHR28629:SF4">
    <property type="entry name" value="TRIOKINASE_FMN CYCLASE"/>
    <property type="match status" value="1"/>
</dbReference>
<dbReference type="Pfam" id="PF02733">
    <property type="entry name" value="Dak1"/>
    <property type="match status" value="1"/>
</dbReference>
<dbReference type="Pfam" id="PF02734">
    <property type="entry name" value="Dak2"/>
    <property type="match status" value="1"/>
</dbReference>
<dbReference type="SMART" id="SM01120">
    <property type="entry name" value="Dak2"/>
    <property type="match status" value="1"/>
</dbReference>
<dbReference type="SUPFAM" id="SSF82549">
    <property type="entry name" value="DAK1/DegV-like"/>
    <property type="match status" value="1"/>
</dbReference>
<dbReference type="SUPFAM" id="SSF101473">
    <property type="entry name" value="DhaL-like"/>
    <property type="match status" value="1"/>
</dbReference>
<dbReference type="PROSITE" id="PS51481">
    <property type="entry name" value="DHAK"/>
    <property type="match status" value="1"/>
</dbReference>
<dbReference type="PROSITE" id="PS51480">
    <property type="entry name" value="DHAL"/>
    <property type="match status" value="1"/>
</dbReference>
<organism>
    <name type="scientific">Pectobacterium atrosepticum (strain SCRI 1043 / ATCC BAA-672)</name>
    <name type="common">Erwinia carotovora subsp. atroseptica</name>
    <dbReference type="NCBI Taxonomy" id="218491"/>
    <lineage>
        <taxon>Bacteria</taxon>
        <taxon>Pseudomonadati</taxon>
        <taxon>Pseudomonadota</taxon>
        <taxon>Gammaproteobacteria</taxon>
        <taxon>Enterobacterales</taxon>
        <taxon>Pectobacteriaceae</taxon>
        <taxon>Pectobacterium</taxon>
    </lineage>
</organism>
<reference key="1">
    <citation type="journal article" date="2004" name="Proc. Natl. Acad. Sci. U.S.A.">
        <title>Genome sequence of the enterobacterial phytopathogen Erwinia carotovora subsp. atroseptica and characterization of virulence factors.</title>
        <authorList>
            <person name="Bell K.S."/>
            <person name="Sebaihia M."/>
            <person name="Pritchard L."/>
            <person name="Holden M.T.G."/>
            <person name="Hyman L.J."/>
            <person name="Holeva M.C."/>
            <person name="Thomson N.R."/>
            <person name="Bentley S.D."/>
            <person name="Churcher L.J.C."/>
            <person name="Mungall K."/>
            <person name="Atkin R."/>
            <person name="Bason N."/>
            <person name="Brooks K."/>
            <person name="Chillingworth T."/>
            <person name="Clark K."/>
            <person name="Doggett J."/>
            <person name="Fraser A."/>
            <person name="Hance Z."/>
            <person name="Hauser H."/>
            <person name="Jagels K."/>
            <person name="Moule S."/>
            <person name="Norbertczak H."/>
            <person name="Ormond D."/>
            <person name="Price C."/>
            <person name="Quail M.A."/>
            <person name="Sanders M."/>
            <person name="Walker D."/>
            <person name="Whitehead S."/>
            <person name="Salmond G.P.C."/>
            <person name="Birch P.R.J."/>
            <person name="Parkhill J."/>
            <person name="Toth I.K."/>
        </authorList>
    </citation>
    <scope>NUCLEOTIDE SEQUENCE [LARGE SCALE GENOMIC DNA]</scope>
    <source>
        <strain>SCRI 1043 / ATCC BAA-672</strain>
    </source>
</reference>
<reference key="2">
    <citation type="journal article" date="2018" name="Nat. Chem. Biol.">
        <title>Functional assignment of multiple catabolic pathways for D-apiose.</title>
        <authorList>
            <person name="Carter M.S."/>
            <person name="Zhang X."/>
            <person name="Huang H."/>
            <person name="Bouvier J.T."/>
            <person name="Francisco B.S."/>
            <person name="Vetting M.W."/>
            <person name="Al-Obaidi N."/>
            <person name="Bonanno J.B."/>
            <person name="Ghosh A."/>
            <person name="Zallot R.G."/>
            <person name="Andersen H.M."/>
            <person name="Almo S.C."/>
            <person name="Gerlt J.A."/>
        </authorList>
    </citation>
    <scope>FUNCTION</scope>
    <scope>CATALYTIC ACTIVITY</scope>
    <scope>BIOPHYSICOCHEMICAL PROPERTIES</scope>
    <scope>PATHWAY</scope>
</reference>
<keyword id="KW-0067">ATP-binding</keyword>
<keyword id="KW-0119">Carbohydrate metabolism</keyword>
<keyword id="KW-0418">Kinase</keyword>
<keyword id="KW-0547">Nucleotide-binding</keyword>
<keyword id="KW-1185">Reference proteome</keyword>
<keyword id="KW-0808">Transferase</keyword>
<protein>
    <recommendedName>
        <fullName evidence="5">L-erythrulose kinase</fullName>
        <ecNumber evidence="4">2.7.1.209</ecNumber>
    </recommendedName>
</protein>
<comment type="function">
    <text evidence="4">Involved in catabolism of D-apiose. Catalyzes the phosphorylation of L-erythrulose to L-erythrulose 1-phosphate (PubMed:29867142). Can also phosphorylate D-erythrulose and dihydroxyacetone in vitro (PubMed:29867142).</text>
</comment>
<comment type="catalytic activity">
    <reaction evidence="4">
        <text>L-erythrulose + ATP = L-erythrulose 1-phosphate + ADP + H(+)</text>
        <dbReference type="Rhea" id="RHEA:48780"/>
        <dbReference type="ChEBI" id="CHEBI:15378"/>
        <dbReference type="ChEBI" id="CHEBI:27913"/>
        <dbReference type="ChEBI" id="CHEBI:30616"/>
        <dbReference type="ChEBI" id="CHEBI:58002"/>
        <dbReference type="ChEBI" id="CHEBI:456216"/>
        <dbReference type="EC" id="2.7.1.209"/>
    </reaction>
</comment>
<comment type="biophysicochemical properties">
    <kinetics>
        <KM evidence="4">0.007 mM for L-erythrulose</KM>
        <KM evidence="4">0.005 mM for D-erythrulose</KM>
        <KM evidence="4">0.015 mM for dihydroxyacetone</KM>
        <text evidence="4">kcat is 2.76 sec(-1) with L-erythrulose as substrate. kcat is 0.72 sec(-1) with D-erythrulose as substrate. kcat is 1.34 sec(-1) with dihydroxyacetone as substrate.</text>
    </kinetics>
</comment>
<comment type="pathway">
    <text evidence="4">Carbohydrate metabolism.</text>
</comment>
<proteinExistence type="evidence at protein level"/>
<name>LERK_PECAS</name>
<evidence type="ECO:0000250" key="1">
    <source>
        <dbReference type="UniProtKB" id="P76014"/>
    </source>
</evidence>
<evidence type="ECO:0000255" key="2">
    <source>
        <dbReference type="PROSITE-ProRule" id="PRU00813"/>
    </source>
</evidence>
<evidence type="ECO:0000255" key="3">
    <source>
        <dbReference type="PROSITE-ProRule" id="PRU00814"/>
    </source>
</evidence>
<evidence type="ECO:0000269" key="4">
    <source>
    </source>
</evidence>
<evidence type="ECO:0000303" key="5">
    <source>
    </source>
</evidence>
<evidence type="ECO:0000312" key="6">
    <source>
        <dbReference type="EMBL" id="CAG73778.1"/>
    </source>
</evidence>
<feature type="chain" id="PRO_0000446039" description="L-erythrulose kinase">
    <location>
        <begin position="1"/>
        <end position="590"/>
    </location>
</feature>
<feature type="domain" description="DhaK" evidence="3">
    <location>
        <begin position="7"/>
        <end position="331"/>
    </location>
</feature>
<feature type="domain" description="DhaL" evidence="2">
    <location>
        <begin position="366"/>
        <end position="568"/>
    </location>
</feature>
<feature type="active site" description="Tele-hemiaminal-histidine intermediate" evidence="3">
    <location>
        <position position="217"/>
    </location>
</feature>
<feature type="binding site" evidence="1">
    <location>
        <begin position="398"/>
        <end position="401"/>
    </location>
    <ligand>
        <name>ADP</name>
        <dbReference type="ChEBI" id="CHEBI:456216"/>
    </ligand>
</feature>
<feature type="binding site" evidence="1">
    <location>
        <begin position="441"/>
        <end position="442"/>
    </location>
    <ligand>
        <name>ADP</name>
        <dbReference type="ChEBI" id="CHEBI:456216"/>
    </ligand>
</feature>
<feature type="binding site" evidence="1">
    <location>
        <position position="483"/>
    </location>
    <ligand>
        <name>ADP</name>
        <dbReference type="ChEBI" id="CHEBI:456216"/>
    </ligand>
</feature>
<feature type="binding site" evidence="1">
    <location>
        <position position="540"/>
    </location>
    <ligand>
        <name>ADP</name>
        <dbReference type="ChEBI" id="CHEBI:456216"/>
    </ligand>
</feature>
<feature type="binding site" evidence="1">
    <location>
        <begin position="553"/>
        <end position="555"/>
    </location>
    <ligand>
        <name>ADP</name>
        <dbReference type="ChEBI" id="CHEBI:456216"/>
    </ligand>
</feature>